<sequence length="89" mass="10236">MAKESMKAREVKRQKLVKKYAEKRAALKEAGDYEGLQKLPKNSSPVRLHNRCKLTGRPKGYMRQFGLSRVMFREMANQGLIPGVKKASW</sequence>
<protein>
    <recommendedName>
        <fullName evidence="1">Small ribosomal subunit protein uS14</fullName>
    </recommendedName>
    <alternativeName>
        <fullName evidence="3">30S ribosomal protein S14</fullName>
    </alternativeName>
</protein>
<keyword id="KW-0687">Ribonucleoprotein</keyword>
<keyword id="KW-0689">Ribosomal protein</keyword>
<keyword id="KW-0694">RNA-binding</keyword>
<keyword id="KW-0699">rRNA-binding</keyword>
<organism>
    <name type="scientific">Christiangramia forsetii (strain DSM 17595 / CGMCC 1.15422 / KT0803)</name>
    <name type="common">Gramella forsetii</name>
    <dbReference type="NCBI Taxonomy" id="411154"/>
    <lineage>
        <taxon>Bacteria</taxon>
        <taxon>Pseudomonadati</taxon>
        <taxon>Bacteroidota</taxon>
        <taxon>Flavobacteriia</taxon>
        <taxon>Flavobacteriales</taxon>
        <taxon>Flavobacteriaceae</taxon>
        <taxon>Christiangramia</taxon>
    </lineage>
</organism>
<reference key="1">
    <citation type="journal article" date="2006" name="Environ. Microbiol.">
        <title>Whole genome analysis of the marine Bacteroidetes'Gramella forsetii' reveals adaptations to degradation of polymeric organic matter.</title>
        <authorList>
            <person name="Bauer M."/>
            <person name="Kube M."/>
            <person name="Teeling H."/>
            <person name="Richter M."/>
            <person name="Lombardot T."/>
            <person name="Allers E."/>
            <person name="Wuerdemann C.A."/>
            <person name="Quast C."/>
            <person name="Kuhl H."/>
            <person name="Knaust F."/>
            <person name="Woebken D."/>
            <person name="Bischof K."/>
            <person name="Mussmann M."/>
            <person name="Choudhuri J.V."/>
            <person name="Meyer F."/>
            <person name="Reinhardt R."/>
            <person name="Amann R.I."/>
            <person name="Gloeckner F.O."/>
        </authorList>
    </citation>
    <scope>NUCLEOTIDE SEQUENCE [LARGE SCALE GENOMIC DNA]</scope>
    <source>
        <strain>DSM 17595 / CGMCC 1.15422 / KT0803</strain>
    </source>
</reference>
<name>RS14_CHRFK</name>
<proteinExistence type="inferred from homology"/>
<gene>
    <name evidence="1" type="primary">rpsN</name>
    <name type="ordered locus">GFO_2826</name>
</gene>
<dbReference type="EMBL" id="CU207366">
    <property type="protein sequence ID" value="CAL67780.1"/>
    <property type="molecule type" value="Genomic_DNA"/>
</dbReference>
<dbReference type="RefSeq" id="WP_011710683.1">
    <property type="nucleotide sequence ID" value="NC_008571.1"/>
</dbReference>
<dbReference type="SMR" id="A0M585"/>
<dbReference type="STRING" id="411154.GFO_2826"/>
<dbReference type="KEGG" id="gfo:GFO_2826"/>
<dbReference type="eggNOG" id="COG0199">
    <property type="taxonomic scope" value="Bacteria"/>
</dbReference>
<dbReference type="HOGENOM" id="CLU_139869_0_0_10"/>
<dbReference type="OrthoDB" id="9810484at2"/>
<dbReference type="Proteomes" id="UP000000755">
    <property type="component" value="Chromosome"/>
</dbReference>
<dbReference type="GO" id="GO:0005737">
    <property type="term" value="C:cytoplasm"/>
    <property type="evidence" value="ECO:0007669"/>
    <property type="project" value="UniProtKB-ARBA"/>
</dbReference>
<dbReference type="GO" id="GO:0015935">
    <property type="term" value="C:small ribosomal subunit"/>
    <property type="evidence" value="ECO:0007669"/>
    <property type="project" value="TreeGrafter"/>
</dbReference>
<dbReference type="GO" id="GO:0019843">
    <property type="term" value="F:rRNA binding"/>
    <property type="evidence" value="ECO:0007669"/>
    <property type="project" value="UniProtKB-UniRule"/>
</dbReference>
<dbReference type="GO" id="GO:0003735">
    <property type="term" value="F:structural constituent of ribosome"/>
    <property type="evidence" value="ECO:0007669"/>
    <property type="project" value="InterPro"/>
</dbReference>
<dbReference type="GO" id="GO:0006412">
    <property type="term" value="P:translation"/>
    <property type="evidence" value="ECO:0007669"/>
    <property type="project" value="UniProtKB-UniRule"/>
</dbReference>
<dbReference type="Gene3D" id="4.10.830.10">
    <property type="entry name" value="30s Ribosomal Protein S14, Chain N"/>
    <property type="match status" value="1"/>
</dbReference>
<dbReference type="HAMAP" id="MF_00537">
    <property type="entry name" value="Ribosomal_uS14_1"/>
    <property type="match status" value="1"/>
</dbReference>
<dbReference type="InterPro" id="IPR001209">
    <property type="entry name" value="Ribosomal_uS14"/>
</dbReference>
<dbReference type="InterPro" id="IPR023036">
    <property type="entry name" value="Ribosomal_uS14_bac/plastid"/>
</dbReference>
<dbReference type="InterPro" id="IPR018271">
    <property type="entry name" value="Ribosomal_uS14_CS"/>
</dbReference>
<dbReference type="InterPro" id="IPR043140">
    <property type="entry name" value="Ribosomal_uS14_sf"/>
</dbReference>
<dbReference type="NCBIfam" id="NF006477">
    <property type="entry name" value="PRK08881.1"/>
    <property type="match status" value="1"/>
</dbReference>
<dbReference type="PANTHER" id="PTHR19836">
    <property type="entry name" value="30S RIBOSOMAL PROTEIN S14"/>
    <property type="match status" value="1"/>
</dbReference>
<dbReference type="PANTHER" id="PTHR19836:SF19">
    <property type="entry name" value="SMALL RIBOSOMAL SUBUNIT PROTEIN US14M"/>
    <property type="match status" value="1"/>
</dbReference>
<dbReference type="Pfam" id="PF00253">
    <property type="entry name" value="Ribosomal_S14"/>
    <property type="match status" value="1"/>
</dbReference>
<dbReference type="SUPFAM" id="SSF57716">
    <property type="entry name" value="Glucocorticoid receptor-like (DNA-binding domain)"/>
    <property type="match status" value="1"/>
</dbReference>
<dbReference type="PROSITE" id="PS00527">
    <property type="entry name" value="RIBOSOMAL_S14"/>
    <property type="match status" value="1"/>
</dbReference>
<accession>A0M585</accession>
<evidence type="ECO:0000255" key="1">
    <source>
        <dbReference type="HAMAP-Rule" id="MF_00537"/>
    </source>
</evidence>
<evidence type="ECO:0000256" key="2">
    <source>
        <dbReference type="SAM" id="MobiDB-lite"/>
    </source>
</evidence>
<evidence type="ECO:0000305" key="3"/>
<feature type="chain" id="PRO_1000128413" description="Small ribosomal subunit protein uS14">
    <location>
        <begin position="1"/>
        <end position="89"/>
    </location>
</feature>
<feature type="region of interest" description="Disordered" evidence="2">
    <location>
        <begin position="32"/>
        <end position="51"/>
    </location>
</feature>
<comment type="function">
    <text evidence="1">Binds 16S rRNA, required for the assembly of 30S particles and may also be responsible for determining the conformation of the 16S rRNA at the A site.</text>
</comment>
<comment type="subunit">
    <text evidence="1">Part of the 30S ribosomal subunit. Contacts proteins S3 and S10.</text>
</comment>
<comment type="similarity">
    <text evidence="1">Belongs to the universal ribosomal protein uS14 family.</text>
</comment>